<feature type="chain" id="PRO_0000237059" description="Small ribosomal subunit protein uS10">
    <location>
        <begin position="1"/>
        <end position="102"/>
    </location>
</feature>
<keyword id="KW-0687">Ribonucleoprotein</keyword>
<keyword id="KW-0689">Ribosomal protein</keyword>
<dbReference type="EMBL" id="AP007255">
    <property type="protein sequence ID" value="BAE51935.1"/>
    <property type="status" value="ALT_INIT"/>
    <property type="molecule type" value="Genomic_DNA"/>
</dbReference>
<dbReference type="RefSeq" id="WP_002725423.1">
    <property type="nucleotide sequence ID" value="NC_007626.1"/>
</dbReference>
<dbReference type="SMR" id="Q2W2J0"/>
<dbReference type="STRING" id="342108.amb3131"/>
<dbReference type="KEGG" id="mag:amb3131"/>
<dbReference type="HOGENOM" id="CLU_122625_1_3_5"/>
<dbReference type="OrthoDB" id="9804464at2"/>
<dbReference type="Proteomes" id="UP000007058">
    <property type="component" value="Chromosome"/>
</dbReference>
<dbReference type="GO" id="GO:1990904">
    <property type="term" value="C:ribonucleoprotein complex"/>
    <property type="evidence" value="ECO:0007669"/>
    <property type="project" value="UniProtKB-KW"/>
</dbReference>
<dbReference type="GO" id="GO:0005840">
    <property type="term" value="C:ribosome"/>
    <property type="evidence" value="ECO:0007669"/>
    <property type="project" value="UniProtKB-KW"/>
</dbReference>
<dbReference type="GO" id="GO:0003735">
    <property type="term" value="F:structural constituent of ribosome"/>
    <property type="evidence" value="ECO:0007669"/>
    <property type="project" value="InterPro"/>
</dbReference>
<dbReference type="GO" id="GO:0000049">
    <property type="term" value="F:tRNA binding"/>
    <property type="evidence" value="ECO:0007669"/>
    <property type="project" value="UniProtKB-UniRule"/>
</dbReference>
<dbReference type="GO" id="GO:0006412">
    <property type="term" value="P:translation"/>
    <property type="evidence" value="ECO:0007669"/>
    <property type="project" value="UniProtKB-UniRule"/>
</dbReference>
<dbReference type="FunFam" id="3.30.70.600:FF:000001">
    <property type="entry name" value="30S ribosomal protein S10"/>
    <property type="match status" value="1"/>
</dbReference>
<dbReference type="Gene3D" id="3.30.70.600">
    <property type="entry name" value="Ribosomal protein S10 domain"/>
    <property type="match status" value="1"/>
</dbReference>
<dbReference type="HAMAP" id="MF_00508">
    <property type="entry name" value="Ribosomal_uS10"/>
    <property type="match status" value="1"/>
</dbReference>
<dbReference type="InterPro" id="IPR001848">
    <property type="entry name" value="Ribosomal_uS10"/>
</dbReference>
<dbReference type="InterPro" id="IPR027486">
    <property type="entry name" value="Ribosomal_uS10_dom"/>
</dbReference>
<dbReference type="InterPro" id="IPR036838">
    <property type="entry name" value="Ribosomal_uS10_dom_sf"/>
</dbReference>
<dbReference type="NCBIfam" id="NF001861">
    <property type="entry name" value="PRK00596.1"/>
    <property type="match status" value="1"/>
</dbReference>
<dbReference type="NCBIfam" id="TIGR01049">
    <property type="entry name" value="rpsJ_bact"/>
    <property type="match status" value="1"/>
</dbReference>
<dbReference type="PANTHER" id="PTHR11700">
    <property type="entry name" value="30S RIBOSOMAL PROTEIN S10 FAMILY MEMBER"/>
    <property type="match status" value="1"/>
</dbReference>
<dbReference type="Pfam" id="PF00338">
    <property type="entry name" value="Ribosomal_S10"/>
    <property type="match status" value="1"/>
</dbReference>
<dbReference type="PRINTS" id="PR00971">
    <property type="entry name" value="RIBOSOMALS10"/>
</dbReference>
<dbReference type="SMART" id="SM01403">
    <property type="entry name" value="Ribosomal_S10"/>
    <property type="match status" value="1"/>
</dbReference>
<dbReference type="SUPFAM" id="SSF54999">
    <property type="entry name" value="Ribosomal protein S10"/>
    <property type="match status" value="1"/>
</dbReference>
<sequence>MESQNIRIRLKAFDHRVLDQSTREIVNTAKRTGAQVRGPIPLPSRIEKFTVNRSPHIDKKSREQFEIRTHKRLLDIVDPTPQTVDALMKLDLAAGVDVEIKL</sequence>
<evidence type="ECO:0000255" key="1">
    <source>
        <dbReference type="HAMAP-Rule" id="MF_00508"/>
    </source>
</evidence>
<evidence type="ECO:0000305" key="2"/>
<organism>
    <name type="scientific">Paramagnetospirillum magneticum (strain ATCC 700264 / AMB-1)</name>
    <name type="common">Magnetospirillum magneticum</name>
    <dbReference type="NCBI Taxonomy" id="342108"/>
    <lineage>
        <taxon>Bacteria</taxon>
        <taxon>Pseudomonadati</taxon>
        <taxon>Pseudomonadota</taxon>
        <taxon>Alphaproteobacteria</taxon>
        <taxon>Rhodospirillales</taxon>
        <taxon>Magnetospirillaceae</taxon>
        <taxon>Paramagnetospirillum</taxon>
    </lineage>
</organism>
<comment type="function">
    <text evidence="1">Involved in the binding of tRNA to the ribosomes.</text>
</comment>
<comment type="subunit">
    <text evidence="1">Part of the 30S ribosomal subunit.</text>
</comment>
<comment type="similarity">
    <text evidence="1">Belongs to the universal ribosomal protein uS10 family.</text>
</comment>
<comment type="sequence caution" evidence="2">
    <conflict type="erroneous initiation">
        <sequence resource="EMBL-CDS" id="BAE51935"/>
    </conflict>
</comment>
<gene>
    <name evidence="1" type="primary">rpsJ</name>
    <name type="ordered locus">amb3131</name>
</gene>
<reference key="1">
    <citation type="journal article" date="2005" name="DNA Res.">
        <title>Complete genome sequence of the facultative anaerobic magnetotactic bacterium Magnetospirillum sp. strain AMB-1.</title>
        <authorList>
            <person name="Matsunaga T."/>
            <person name="Okamura Y."/>
            <person name="Fukuda Y."/>
            <person name="Wahyudi A.T."/>
            <person name="Murase Y."/>
            <person name="Takeyama H."/>
        </authorList>
    </citation>
    <scope>NUCLEOTIDE SEQUENCE [LARGE SCALE GENOMIC DNA]</scope>
    <source>
        <strain>ATCC 700264 / AMB-1</strain>
    </source>
</reference>
<accession>Q2W2J0</accession>
<protein>
    <recommendedName>
        <fullName evidence="1">Small ribosomal subunit protein uS10</fullName>
    </recommendedName>
    <alternativeName>
        <fullName evidence="2">30S ribosomal protein S10</fullName>
    </alternativeName>
</protein>
<name>RS10_PARM1</name>
<proteinExistence type="inferred from homology"/>